<accession>A5CYZ0</accession>
<keyword id="KW-0004">4Fe-4S</keyword>
<keyword id="KW-0342">GTP-binding</keyword>
<keyword id="KW-0408">Iron</keyword>
<keyword id="KW-0411">Iron-sulfur</keyword>
<keyword id="KW-0456">Lyase</keyword>
<keyword id="KW-0479">Metal-binding</keyword>
<keyword id="KW-0501">Molybdenum cofactor biosynthesis</keyword>
<keyword id="KW-0547">Nucleotide-binding</keyword>
<keyword id="KW-1185">Reference proteome</keyword>
<keyword id="KW-0949">S-adenosyl-L-methionine</keyword>
<sequence length="325" mass="35623">MQDTYQREINYLRISVTDRCNLRCVYCMPEEGVRSLPHGEILRLEEIETVVRAAALTGVKKIRLTGGEPLVRKGLEELVRRVSGIPGIDDIALTTNGLLLPSRAKALKEAGVKRVNVSLDTLRADRYAEITRGGNLAGAWEGIQSALDAGLHPVKLNTVIIRGFNEDEVVAMAMLTINRPLHVRFIELMPIGSSSSWAAGRYVPAAEVMDAISAKLGPLVPARQPAGGGPAKYYRLKDAAGTVGFITSMSEHFCHRCNRLRLTASGGLRPCLYDGREIDLKAPLREGAGTREIAALIMEAIALKPDRHHMLEGWRDRRQMSQIGG</sequence>
<organism>
    <name type="scientific">Pelotomaculum thermopropionicum (strain DSM 13744 / JCM 10971 / SI)</name>
    <dbReference type="NCBI Taxonomy" id="370438"/>
    <lineage>
        <taxon>Bacteria</taxon>
        <taxon>Bacillati</taxon>
        <taxon>Bacillota</taxon>
        <taxon>Clostridia</taxon>
        <taxon>Eubacteriales</taxon>
        <taxon>Desulfotomaculaceae</taxon>
        <taxon>Pelotomaculum</taxon>
    </lineage>
</organism>
<gene>
    <name evidence="1" type="primary">moaA</name>
    <name type="ordered locus">PTH_2623</name>
</gene>
<protein>
    <recommendedName>
        <fullName evidence="1">GTP 3',8-cyclase</fullName>
        <ecNumber evidence="1">4.1.99.22</ecNumber>
    </recommendedName>
    <alternativeName>
        <fullName evidence="1">Molybdenum cofactor biosynthesis protein A</fullName>
    </alternativeName>
</protein>
<evidence type="ECO:0000255" key="1">
    <source>
        <dbReference type="HAMAP-Rule" id="MF_01225"/>
    </source>
</evidence>
<evidence type="ECO:0000255" key="2">
    <source>
        <dbReference type="PROSITE-ProRule" id="PRU01266"/>
    </source>
</evidence>
<feature type="chain" id="PRO_1000085703" description="GTP 3',8-cyclase">
    <location>
        <begin position="1"/>
        <end position="325"/>
    </location>
</feature>
<feature type="domain" description="Radical SAM core" evidence="2">
    <location>
        <begin position="4"/>
        <end position="219"/>
    </location>
</feature>
<feature type="binding site" evidence="1">
    <location>
        <position position="13"/>
    </location>
    <ligand>
        <name>GTP</name>
        <dbReference type="ChEBI" id="CHEBI:37565"/>
    </ligand>
</feature>
<feature type="binding site" evidence="1">
    <location>
        <position position="20"/>
    </location>
    <ligand>
        <name>[4Fe-4S] cluster</name>
        <dbReference type="ChEBI" id="CHEBI:49883"/>
        <label>1</label>
        <note>4Fe-4S-S-AdoMet</note>
    </ligand>
</feature>
<feature type="binding site" evidence="1">
    <location>
        <position position="24"/>
    </location>
    <ligand>
        <name>[4Fe-4S] cluster</name>
        <dbReference type="ChEBI" id="CHEBI:49883"/>
        <label>1</label>
        <note>4Fe-4S-S-AdoMet</note>
    </ligand>
</feature>
<feature type="binding site" evidence="1">
    <location>
        <position position="26"/>
    </location>
    <ligand>
        <name>S-adenosyl-L-methionine</name>
        <dbReference type="ChEBI" id="CHEBI:59789"/>
    </ligand>
</feature>
<feature type="binding site" evidence="1">
    <location>
        <position position="27"/>
    </location>
    <ligand>
        <name>[4Fe-4S] cluster</name>
        <dbReference type="ChEBI" id="CHEBI:49883"/>
        <label>1</label>
        <note>4Fe-4S-S-AdoMet</note>
    </ligand>
</feature>
<feature type="binding site" evidence="1">
    <location>
        <position position="63"/>
    </location>
    <ligand>
        <name>GTP</name>
        <dbReference type="ChEBI" id="CHEBI:37565"/>
    </ligand>
</feature>
<feature type="binding site" evidence="1">
    <location>
        <position position="67"/>
    </location>
    <ligand>
        <name>S-adenosyl-L-methionine</name>
        <dbReference type="ChEBI" id="CHEBI:59789"/>
    </ligand>
</feature>
<feature type="binding site" evidence="1">
    <location>
        <position position="94"/>
    </location>
    <ligand>
        <name>GTP</name>
        <dbReference type="ChEBI" id="CHEBI:37565"/>
    </ligand>
</feature>
<feature type="binding site" evidence="1">
    <location>
        <position position="118"/>
    </location>
    <ligand>
        <name>S-adenosyl-L-methionine</name>
        <dbReference type="ChEBI" id="CHEBI:59789"/>
    </ligand>
</feature>
<feature type="binding site" evidence="1">
    <location>
        <position position="155"/>
    </location>
    <ligand>
        <name>GTP</name>
        <dbReference type="ChEBI" id="CHEBI:37565"/>
    </ligand>
</feature>
<feature type="binding site" evidence="1">
    <location>
        <position position="189"/>
    </location>
    <ligand>
        <name>S-adenosyl-L-methionine</name>
        <dbReference type="ChEBI" id="CHEBI:59789"/>
    </ligand>
</feature>
<feature type="binding site" evidence="1">
    <location>
        <position position="254"/>
    </location>
    <ligand>
        <name>[4Fe-4S] cluster</name>
        <dbReference type="ChEBI" id="CHEBI:49883"/>
        <label>2</label>
        <note>4Fe-4S-substrate</note>
    </ligand>
</feature>
<feature type="binding site" evidence="1">
    <location>
        <position position="257"/>
    </location>
    <ligand>
        <name>[4Fe-4S] cluster</name>
        <dbReference type="ChEBI" id="CHEBI:49883"/>
        <label>2</label>
        <note>4Fe-4S-substrate</note>
    </ligand>
</feature>
<feature type="binding site" evidence="1">
    <location>
        <begin position="259"/>
        <end position="261"/>
    </location>
    <ligand>
        <name>GTP</name>
        <dbReference type="ChEBI" id="CHEBI:37565"/>
    </ligand>
</feature>
<feature type="binding site" evidence="1">
    <location>
        <position position="271"/>
    </location>
    <ligand>
        <name>[4Fe-4S] cluster</name>
        <dbReference type="ChEBI" id="CHEBI:49883"/>
        <label>2</label>
        <note>4Fe-4S-substrate</note>
    </ligand>
</feature>
<reference key="1">
    <citation type="journal article" date="2008" name="Genome Res.">
        <title>The genome of Pelotomaculum thermopropionicum reveals niche-associated evolution in anaerobic microbiota.</title>
        <authorList>
            <person name="Kosaka T."/>
            <person name="Kato S."/>
            <person name="Shimoyama T."/>
            <person name="Ishii S."/>
            <person name="Abe T."/>
            <person name="Watanabe K."/>
        </authorList>
    </citation>
    <scope>NUCLEOTIDE SEQUENCE [LARGE SCALE GENOMIC DNA]</scope>
    <source>
        <strain>DSM 13744 / JCM 10971 / SI</strain>
    </source>
</reference>
<proteinExistence type="inferred from homology"/>
<dbReference type="EC" id="4.1.99.22" evidence="1"/>
<dbReference type="EMBL" id="AP009389">
    <property type="protein sequence ID" value="BAF60804.1"/>
    <property type="molecule type" value="Genomic_DNA"/>
</dbReference>
<dbReference type="SMR" id="A5CYZ0"/>
<dbReference type="STRING" id="370438.PTH_2623"/>
<dbReference type="KEGG" id="pth:PTH_2623"/>
<dbReference type="eggNOG" id="COG2896">
    <property type="taxonomic scope" value="Bacteria"/>
</dbReference>
<dbReference type="HOGENOM" id="CLU_009273_0_1_9"/>
<dbReference type="UniPathway" id="UPA00344"/>
<dbReference type="Proteomes" id="UP000006556">
    <property type="component" value="Chromosome"/>
</dbReference>
<dbReference type="GO" id="GO:0051539">
    <property type="term" value="F:4 iron, 4 sulfur cluster binding"/>
    <property type="evidence" value="ECO:0007669"/>
    <property type="project" value="UniProtKB-UniRule"/>
</dbReference>
<dbReference type="GO" id="GO:0061799">
    <property type="term" value="F:cyclic pyranopterin monophosphate synthase activity"/>
    <property type="evidence" value="ECO:0007669"/>
    <property type="project" value="TreeGrafter"/>
</dbReference>
<dbReference type="GO" id="GO:0061798">
    <property type="term" value="F:GTP 3',8'-cyclase activity"/>
    <property type="evidence" value="ECO:0007669"/>
    <property type="project" value="UniProtKB-UniRule"/>
</dbReference>
<dbReference type="GO" id="GO:0005525">
    <property type="term" value="F:GTP binding"/>
    <property type="evidence" value="ECO:0007669"/>
    <property type="project" value="UniProtKB-UniRule"/>
</dbReference>
<dbReference type="GO" id="GO:0046872">
    <property type="term" value="F:metal ion binding"/>
    <property type="evidence" value="ECO:0007669"/>
    <property type="project" value="UniProtKB-KW"/>
</dbReference>
<dbReference type="GO" id="GO:1904047">
    <property type="term" value="F:S-adenosyl-L-methionine binding"/>
    <property type="evidence" value="ECO:0007669"/>
    <property type="project" value="UniProtKB-UniRule"/>
</dbReference>
<dbReference type="GO" id="GO:0006777">
    <property type="term" value="P:Mo-molybdopterin cofactor biosynthetic process"/>
    <property type="evidence" value="ECO:0007669"/>
    <property type="project" value="UniProtKB-UniRule"/>
</dbReference>
<dbReference type="CDD" id="cd01335">
    <property type="entry name" value="Radical_SAM"/>
    <property type="match status" value="1"/>
</dbReference>
<dbReference type="CDD" id="cd21117">
    <property type="entry name" value="Twitch_MoaA"/>
    <property type="match status" value="1"/>
</dbReference>
<dbReference type="Gene3D" id="3.20.20.70">
    <property type="entry name" value="Aldolase class I"/>
    <property type="match status" value="1"/>
</dbReference>
<dbReference type="HAMAP" id="MF_01225_B">
    <property type="entry name" value="MoaA_B"/>
    <property type="match status" value="1"/>
</dbReference>
<dbReference type="InterPro" id="IPR013785">
    <property type="entry name" value="Aldolase_TIM"/>
</dbReference>
<dbReference type="InterPro" id="IPR006638">
    <property type="entry name" value="Elp3/MiaA/NifB-like_rSAM"/>
</dbReference>
<dbReference type="InterPro" id="IPR013483">
    <property type="entry name" value="MoaA"/>
</dbReference>
<dbReference type="InterPro" id="IPR000385">
    <property type="entry name" value="MoaA_NifB_PqqE_Fe-S-bd_CS"/>
</dbReference>
<dbReference type="InterPro" id="IPR010505">
    <property type="entry name" value="MoaA_twitch"/>
</dbReference>
<dbReference type="InterPro" id="IPR050105">
    <property type="entry name" value="MoCo_biosynth_MoaA/MoaC"/>
</dbReference>
<dbReference type="InterPro" id="IPR007197">
    <property type="entry name" value="rSAM"/>
</dbReference>
<dbReference type="NCBIfam" id="TIGR02666">
    <property type="entry name" value="moaA"/>
    <property type="match status" value="1"/>
</dbReference>
<dbReference type="NCBIfam" id="NF001199">
    <property type="entry name" value="PRK00164.2-1"/>
    <property type="match status" value="1"/>
</dbReference>
<dbReference type="PANTHER" id="PTHR22960:SF0">
    <property type="entry name" value="MOLYBDENUM COFACTOR BIOSYNTHESIS PROTEIN 1"/>
    <property type="match status" value="1"/>
</dbReference>
<dbReference type="PANTHER" id="PTHR22960">
    <property type="entry name" value="MOLYBDOPTERIN COFACTOR SYNTHESIS PROTEIN A"/>
    <property type="match status" value="1"/>
</dbReference>
<dbReference type="Pfam" id="PF13353">
    <property type="entry name" value="Fer4_12"/>
    <property type="match status" value="1"/>
</dbReference>
<dbReference type="Pfam" id="PF06463">
    <property type="entry name" value="Mob_synth_C"/>
    <property type="match status" value="1"/>
</dbReference>
<dbReference type="Pfam" id="PF04055">
    <property type="entry name" value="Radical_SAM"/>
    <property type="match status" value="1"/>
</dbReference>
<dbReference type="SFLD" id="SFLDG01383">
    <property type="entry name" value="cyclic_pyranopterin_phosphate"/>
    <property type="match status" value="1"/>
</dbReference>
<dbReference type="SFLD" id="SFLDG01072">
    <property type="entry name" value="dehydrogenase_like"/>
    <property type="match status" value="1"/>
</dbReference>
<dbReference type="SMART" id="SM00729">
    <property type="entry name" value="Elp3"/>
    <property type="match status" value="1"/>
</dbReference>
<dbReference type="SUPFAM" id="SSF102114">
    <property type="entry name" value="Radical SAM enzymes"/>
    <property type="match status" value="1"/>
</dbReference>
<dbReference type="PROSITE" id="PS01305">
    <property type="entry name" value="MOAA_NIFB_PQQE"/>
    <property type="match status" value="1"/>
</dbReference>
<dbReference type="PROSITE" id="PS51918">
    <property type="entry name" value="RADICAL_SAM"/>
    <property type="match status" value="1"/>
</dbReference>
<comment type="function">
    <text evidence="1">Catalyzes the cyclization of GTP to (8S)-3',8-cyclo-7,8-dihydroguanosine 5'-triphosphate.</text>
</comment>
<comment type="catalytic activity">
    <reaction evidence="1">
        <text>GTP + AH2 + S-adenosyl-L-methionine = (8S)-3',8-cyclo-7,8-dihydroguanosine 5'-triphosphate + 5'-deoxyadenosine + L-methionine + A + H(+)</text>
        <dbReference type="Rhea" id="RHEA:49576"/>
        <dbReference type="ChEBI" id="CHEBI:13193"/>
        <dbReference type="ChEBI" id="CHEBI:15378"/>
        <dbReference type="ChEBI" id="CHEBI:17319"/>
        <dbReference type="ChEBI" id="CHEBI:17499"/>
        <dbReference type="ChEBI" id="CHEBI:37565"/>
        <dbReference type="ChEBI" id="CHEBI:57844"/>
        <dbReference type="ChEBI" id="CHEBI:59789"/>
        <dbReference type="ChEBI" id="CHEBI:131766"/>
        <dbReference type="EC" id="4.1.99.22"/>
    </reaction>
</comment>
<comment type="cofactor">
    <cofactor evidence="1">
        <name>[4Fe-4S] cluster</name>
        <dbReference type="ChEBI" id="CHEBI:49883"/>
    </cofactor>
    <text evidence="1">Binds 2 [4Fe-4S] clusters. Binds 1 [4Fe-4S] cluster coordinated with 3 cysteines and an exchangeable S-adenosyl-L-methionine and 1 [4Fe-4S] cluster coordinated with 3 cysteines and the GTP-derived substrate.</text>
</comment>
<comment type="pathway">
    <text evidence="1">Cofactor biosynthesis; molybdopterin biosynthesis.</text>
</comment>
<comment type="subunit">
    <text evidence="1">Monomer and homodimer.</text>
</comment>
<comment type="similarity">
    <text evidence="1">Belongs to the radical SAM superfamily. MoaA family.</text>
</comment>
<name>MOAA_PELTS</name>